<keyword id="KW-0238">DNA-binding</keyword>
<keyword id="KW-0255">Endonuclease</keyword>
<keyword id="KW-0378">Hydrolase</keyword>
<keyword id="KW-0460">Magnesium</keyword>
<keyword id="KW-0479">Metal-binding</keyword>
<keyword id="KW-0540">Nuclease</keyword>
<keyword id="KW-0630">Potassium</keyword>
<evidence type="ECO:0000255" key="1">
    <source>
        <dbReference type="HAMAP-Rule" id="MF_01192"/>
    </source>
</evidence>
<accession>A8GIF8</accession>
<feature type="chain" id="PRO_1000065882" description="Flap endonuclease Xni">
    <location>
        <begin position="1"/>
        <end position="251"/>
    </location>
</feature>
<feature type="domain" description="5'-3' exonuclease" evidence="1">
    <location>
        <begin position="160"/>
        <end position="248"/>
    </location>
</feature>
<feature type="region of interest" description="Interaction with DNA" evidence="1">
    <location>
        <begin position="184"/>
        <end position="189"/>
    </location>
</feature>
<feature type="binding site" evidence="1">
    <location>
        <position position="104"/>
    </location>
    <ligand>
        <name>Mg(2+)</name>
        <dbReference type="ChEBI" id="CHEBI:18420"/>
    </ligand>
</feature>
<feature type="binding site" evidence="1">
    <location>
        <position position="171"/>
    </location>
    <ligand>
        <name>K(+)</name>
        <dbReference type="ChEBI" id="CHEBI:29103"/>
    </ligand>
</feature>
<feature type="binding site" evidence="1">
    <location>
        <position position="172"/>
    </location>
    <ligand>
        <name>K(+)</name>
        <dbReference type="ChEBI" id="CHEBI:29103"/>
    </ligand>
</feature>
<feature type="binding site" evidence="1">
    <location>
        <position position="180"/>
    </location>
    <ligand>
        <name>K(+)</name>
        <dbReference type="ChEBI" id="CHEBI:29103"/>
    </ligand>
</feature>
<feature type="binding site" evidence="1">
    <location>
        <position position="182"/>
    </location>
    <ligand>
        <name>K(+)</name>
        <dbReference type="ChEBI" id="CHEBI:29103"/>
    </ligand>
</feature>
<feature type="binding site" evidence="1">
    <location>
        <position position="185"/>
    </location>
    <ligand>
        <name>K(+)</name>
        <dbReference type="ChEBI" id="CHEBI:29103"/>
    </ligand>
</feature>
<name>XNI_SERP5</name>
<protein>
    <recommendedName>
        <fullName evidence="1">Flap endonuclease Xni</fullName>
        <shortName evidence="1">FEN</shortName>
        <ecNumber evidence="1">3.1.-.-</ecNumber>
    </recommendedName>
</protein>
<organism>
    <name type="scientific">Serratia proteamaculans (strain 568)</name>
    <dbReference type="NCBI Taxonomy" id="399741"/>
    <lineage>
        <taxon>Bacteria</taxon>
        <taxon>Pseudomonadati</taxon>
        <taxon>Pseudomonadota</taxon>
        <taxon>Gammaproteobacteria</taxon>
        <taxon>Enterobacterales</taxon>
        <taxon>Yersiniaceae</taxon>
        <taxon>Serratia</taxon>
    </lineage>
</organism>
<proteinExistence type="inferred from homology"/>
<gene>
    <name evidence="1" type="primary">xni</name>
    <name evidence="1" type="synonym">ygdG</name>
    <name type="ordered locus">Spro_3802</name>
</gene>
<comment type="function">
    <text evidence="1">Has flap endonuclease activity. During DNA replication, flap endonucleases cleave the 5'-overhanging flap structure that is generated by displacement synthesis when DNA polymerase encounters the 5'-end of a downstream Okazaki fragment.</text>
</comment>
<comment type="cofactor">
    <cofactor evidence="1">
        <name>Mg(2+)</name>
        <dbReference type="ChEBI" id="CHEBI:18420"/>
    </cofactor>
    <text evidence="1">Binds 2 Mg(2+) per subunit. Only one magnesium ion has a direct interaction with the protein, the other interactions are indirect.</text>
</comment>
<comment type="cofactor">
    <cofactor evidence="1">
        <name>K(+)</name>
        <dbReference type="ChEBI" id="CHEBI:29103"/>
    </cofactor>
    <text evidence="1">Binds 1 K(+) per subunit. The potassium ion strongly increases the affinity for DNA.</text>
</comment>
<comment type="similarity">
    <text evidence="1">Belongs to the Xni family.</text>
</comment>
<dbReference type="EC" id="3.1.-.-" evidence="1"/>
<dbReference type="EMBL" id="CP000826">
    <property type="protein sequence ID" value="ABV42898.1"/>
    <property type="molecule type" value="Genomic_DNA"/>
</dbReference>
<dbReference type="SMR" id="A8GIF8"/>
<dbReference type="STRING" id="399741.Spro_3802"/>
<dbReference type="KEGG" id="spe:Spro_3802"/>
<dbReference type="eggNOG" id="COG0258">
    <property type="taxonomic scope" value="Bacteria"/>
</dbReference>
<dbReference type="HOGENOM" id="CLU_004675_1_2_6"/>
<dbReference type="OrthoDB" id="8070997at2"/>
<dbReference type="GO" id="GO:0008409">
    <property type="term" value="F:5'-3' exonuclease activity"/>
    <property type="evidence" value="ECO:0007669"/>
    <property type="project" value="InterPro"/>
</dbReference>
<dbReference type="GO" id="GO:0017108">
    <property type="term" value="F:5'-flap endonuclease activity"/>
    <property type="evidence" value="ECO:0007669"/>
    <property type="project" value="UniProtKB-UniRule"/>
</dbReference>
<dbReference type="GO" id="GO:0003677">
    <property type="term" value="F:DNA binding"/>
    <property type="evidence" value="ECO:0007669"/>
    <property type="project" value="UniProtKB-UniRule"/>
</dbReference>
<dbReference type="GO" id="GO:0000287">
    <property type="term" value="F:magnesium ion binding"/>
    <property type="evidence" value="ECO:0007669"/>
    <property type="project" value="UniProtKB-UniRule"/>
</dbReference>
<dbReference type="GO" id="GO:0030955">
    <property type="term" value="F:potassium ion binding"/>
    <property type="evidence" value="ECO:0007669"/>
    <property type="project" value="UniProtKB-UniRule"/>
</dbReference>
<dbReference type="GO" id="GO:0033567">
    <property type="term" value="P:DNA replication, Okazaki fragment processing"/>
    <property type="evidence" value="ECO:0007669"/>
    <property type="project" value="UniProtKB-UniRule"/>
</dbReference>
<dbReference type="CDD" id="cd09898">
    <property type="entry name" value="H3TH_53EXO"/>
    <property type="match status" value="1"/>
</dbReference>
<dbReference type="CDD" id="cd09859">
    <property type="entry name" value="PIN_53EXO"/>
    <property type="match status" value="1"/>
</dbReference>
<dbReference type="FunFam" id="1.10.150.20:FF:000003">
    <property type="entry name" value="DNA polymerase I"/>
    <property type="match status" value="1"/>
</dbReference>
<dbReference type="FunFam" id="3.40.50.1010:FF:000011">
    <property type="entry name" value="Flap endonuclease Xni"/>
    <property type="match status" value="1"/>
</dbReference>
<dbReference type="Gene3D" id="1.10.150.20">
    <property type="entry name" value="5' to 3' exonuclease, C-terminal subdomain"/>
    <property type="match status" value="1"/>
</dbReference>
<dbReference type="Gene3D" id="3.40.50.1010">
    <property type="entry name" value="5'-nuclease"/>
    <property type="match status" value="1"/>
</dbReference>
<dbReference type="HAMAP" id="MF_01192">
    <property type="entry name" value="Xni"/>
    <property type="match status" value="1"/>
</dbReference>
<dbReference type="InterPro" id="IPR020046">
    <property type="entry name" value="5-3_exonucl_a-hlix_arch_N"/>
</dbReference>
<dbReference type="InterPro" id="IPR002421">
    <property type="entry name" value="5-3_exonuclease"/>
</dbReference>
<dbReference type="InterPro" id="IPR036279">
    <property type="entry name" value="5-3_exonuclease_C_sf"/>
</dbReference>
<dbReference type="InterPro" id="IPR020045">
    <property type="entry name" value="DNA_polI_H3TH"/>
</dbReference>
<dbReference type="InterPro" id="IPR038969">
    <property type="entry name" value="FEN"/>
</dbReference>
<dbReference type="InterPro" id="IPR008918">
    <property type="entry name" value="HhH2"/>
</dbReference>
<dbReference type="InterPro" id="IPR029060">
    <property type="entry name" value="PIN-like_dom_sf"/>
</dbReference>
<dbReference type="InterPro" id="IPR022895">
    <property type="entry name" value="Xni"/>
</dbReference>
<dbReference type="NCBIfam" id="NF007017">
    <property type="entry name" value="PRK09482.1"/>
    <property type="match status" value="1"/>
</dbReference>
<dbReference type="PANTHER" id="PTHR42646:SF2">
    <property type="entry name" value="5'-3' EXONUCLEASE FAMILY PROTEIN"/>
    <property type="match status" value="1"/>
</dbReference>
<dbReference type="PANTHER" id="PTHR42646">
    <property type="entry name" value="FLAP ENDONUCLEASE XNI"/>
    <property type="match status" value="1"/>
</dbReference>
<dbReference type="Pfam" id="PF01367">
    <property type="entry name" value="5_3_exonuc"/>
    <property type="match status" value="1"/>
</dbReference>
<dbReference type="Pfam" id="PF02739">
    <property type="entry name" value="5_3_exonuc_N"/>
    <property type="match status" value="1"/>
</dbReference>
<dbReference type="SMART" id="SM00475">
    <property type="entry name" value="53EXOc"/>
    <property type="match status" value="1"/>
</dbReference>
<dbReference type="SMART" id="SM00279">
    <property type="entry name" value="HhH2"/>
    <property type="match status" value="1"/>
</dbReference>
<dbReference type="SUPFAM" id="SSF47807">
    <property type="entry name" value="5' to 3' exonuclease, C-terminal subdomain"/>
    <property type="match status" value="1"/>
</dbReference>
<dbReference type="SUPFAM" id="SSF88723">
    <property type="entry name" value="PIN domain-like"/>
    <property type="match status" value="1"/>
</dbReference>
<reference key="1">
    <citation type="submission" date="2007-09" db="EMBL/GenBank/DDBJ databases">
        <title>Complete sequence of chromosome of Serratia proteamaculans 568.</title>
        <authorList>
            <consortium name="US DOE Joint Genome Institute"/>
            <person name="Copeland A."/>
            <person name="Lucas S."/>
            <person name="Lapidus A."/>
            <person name="Barry K."/>
            <person name="Glavina del Rio T."/>
            <person name="Dalin E."/>
            <person name="Tice H."/>
            <person name="Pitluck S."/>
            <person name="Chain P."/>
            <person name="Malfatti S."/>
            <person name="Shin M."/>
            <person name="Vergez L."/>
            <person name="Schmutz J."/>
            <person name="Larimer F."/>
            <person name="Land M."/>
            <person name="Hauser L."/>
            <person name="Kyrpides N."/>
            <person name="Kim E."/>
            <person name="Taghavi S."/>
            <person name="Newman L."/>
            <person name="Vangronsveld J."/>
            <person name="van der Lelie D."/>
            <person name="Richardson P."/>
        </authorList>
    </citation>
    <scope>NUCLEOTIDE SEQUENCE [LARGE SCALE GENOMIC DNA]</scope>
    <source>
        <strain>568</strain>
    </source>
</reference>
<sequence>MMIHLLIVDALNLIRRIHAVQGSPCVNACQHALQQLIQHSRPTHAVAVFDEDDRSESWRHQILPDYKAGRSPMPDNLQQEMPQLRQAFESLGVACWHSPGNEADDLAATLTAKVAGGGHQVTIVSTDKGYCQLLAPSVQIRDYFQKRWLDMPFVQQEFGVSPQQLSDYWGLAGISSSKIPGVAGIGPKTAVLLLQQAGSLDGLYQDLEQVPEKWRGKLEQHREMAYVSKRVATLRTDLALTGNLQQLRLPV</sequence>